<gene>
    <name type="primary">ACYP2</name>
</gene>
<comment type="function">
    <text>Its physiological role is not yet clear.</text>
</comment>
<comment type="catalytic activity">
    <reaction>
        <text>an acyl phosphate + H2O = a carboxylate + phosphate + H(+)</text>
        <dbReference type="Rhea" id="RHEA:14965"/>
        <dbReference type="ChEBI" id="CHEBI:15377"/>
        <dbReference type="ChEBI" id="CHEBI:15378"/>
        <dbReference type="ChEBI" id="CHEBI:29067"/>
        <dbReference type="ChEBI" id="CHEBI:43474"/>
        <dbReference type="ChEBI" id="CHEBI:59918"/>
        <dbReference type="EC" id="3.6.1.7"/>
    </reaction>
</comment>
<comment type="subunit">
    <text>Monomer (TU1) or homodimer (TU3) in absence of reducing factors; disulfide linked.</text>
</comment>
<comment type="similarity">
    <text evidence="4">Belongs to the acylphosphatase family.</text>
</comment>
<protein>
    <recommendedName>
        <fullName>Acylphosphatase-2</fullName>
        <ecNumber>3.6.1.7</ecNumber>
    </recommendedName>
    <alternativeName>
        <fullName>Acylphosphatase isozyme TU1</fullName>
    </alternativeName>
    <alternativeName>
        <fullName>Acylphosphatase, muscle type isozyme</fullName>
    </alternativeName>
    <alternativeName>
        <fullName>Acylphosphate phosphohydrolase 2</fullName>
    </alternativeName>
</protein>
<reference key="1">
    <citation type="journal article" date="1983" name="Eur. J. Biochem.">
        <title>The primary structure of turkey muscle acylphosphatase.</title>
        <authorList>
            <person name="Camici G."/>
            <person name="Manao G."/>
            <person name="Cappugi G."/>
            <person name="Berti A."/>
            <person name="Stefani M."/>
            <person name="Liguri G."/>
            <person name="Ramponi G."/>
        </authorList>
    </citation>
    <scope>PROTEIN SEQUENCE OF 2-103</scope>
    <scope>CLEAVAGE OF INITIATOR METHIONINE</scope>
    <scope>ACETYLATION AT SER-2</scope>
    <scope>GLUTATHIONYLATION AT CYS-26</scope>
    <source>
        <tissue>Skeletal muscle</tissue>
    </source>
</reference>
<feature type="initiator methionine" description="Removed" evidence="1">
    <location>
        <position position="1"/>
    </location>
</feature>
<feature type="chain" id="PRO_0000158549" description="Acylphosphatase-2">
    <location>
        <begin position="2"/>
        <end position="103"/>
    </location>
</feature>
<feature type="domain" description="Acylphosphatase-like" evidence="2">
    <location>
        <begin position="13"/>
        <end position="103"/>
    </location>
</feature>
<feature type="active site" evidence="2">
    <location>
        <position position="28"/>
    </location>
</feature>
<feature type="active site" evidence="2">
    <location>
        <position position="46"/>
    </location>
</feature>
<feature type="modified residue" description="N-acetylserine" evidence="3">
    <location>
        <position position="2"/>
    </location>
</feature>
<feature type="modified residue" description="S-glutathionyl cysteine; alternate" evidence="3">
    <location>
        <position position="26"/>
    </location>
</feature>
<feature type="disulfide bond" description="Interchain; alternate">
    <location>
        <position position="26"/>
    </location>
</feature>
<dbReference type="EC" id="3.6.1.7"/>
<dbReference type="PIR" id="A01018">
    <property type="entry name" value="QPTK"/>
</dbReference>
<dbReference type="SMR" id="P00821"/>
<dbReference type="FunCoup" id="P00821">
    <property type="interactions" value="320"/>
</dbReference>
<dbReference type="iPTMnet" id="P00821"/>
<dbReference type="InParanoid" id="P00821"/>
<dbReference type="OrthoDB" id="9117292at2759"/>
<dbReference type="Proteomes" id="UP000001645">
    <property type="component" value="Unplaced"/>
</dbReference>
<dbReference type="GO" id="GO:0003998">
    <property type="term" value="F:acylphosphatase activity"/>
    <property type="evidence" value="ECO:0007669"/>
    <property type="project" value="UniProtKB-EC"/>
</dbReference>
<dbReference type="FunFam" id="3.30.70.100:FF:000011">
    <property type="entry name" value="Acylphosphatase"/>
    <property type="match status" value="1"/>
</dbReference>
<dbReference type="Gene3D" id="3.30.70.100">
    <property type="match status" value="1"/>
</dbReference>
<dbReference type="InterPro" id="IPR020456">
    <property type="entry name" value="Acylphosphatase"/>
</dbReference>
<dbReference type="InterPro" id="IPR001792">
    <property type="entry name" value="Acylphosphatase-like_dom"/>
</dbReference>
<dbReference type="InterPro" id="IPR036046">
    <property type="entry name" value="Acylphosphatase-like_dom_sf"/>
</dbReference>
<dbReference type="InterPro" id="IPR017968">
    <property type="entry name" value="Acylphosphatase_CS"/>
</dbReference>
<dbReference type="PANTHER" id="PTHR10029">
    <property type="entry name" value="ACYLPHOSPHATASE"/>
    <property type="match status" value="1"/>
</dbReference>
<dbReference type="PANTHER" id="PTHR10029:SF20">
    <property type="entry name" value="ACYLPHOSPHATASE-2"/>
    <property type="match status" value="1"/>
</dbReference>
<dbReference type="Pfam" id="PF00708">
    <property type="entry name" value="Acylphosphatase"/>
    <property type="match status" value="1"/>
</dbReference>
<dbReference type="PRINTS" id="PR00112">
    <property type="entry name" value="ACYLPHPHTASE"/>
</dbReference>
<dbReference type="SUPFAM" id="SSF54975">
    <property type="entry name" value="Acylphosphatase/BLUF domain-like"/>
    <property type="match status" value="1"/>
</dbReference>
<dbReference type="PROSITE" id="PS00150">
    <property type="entry name" value="ACYLPHOSPHATASE_1"/>
    <property type="match status" value="1"/>
</dbReference>
<dbReference type="PROSITE" id="PS00151">
    <property type="entry name" value="ACYLPHOSPHATASE_2"/>
    <property type="match status" value="1"/>
</dbReference>
<dbReference type="PROSITE" id="PS51160">
    <property type="entry name" value="ACYLPHOSPHATASE_3"/>
    <property type="match status" value="1"/>
</dbReference>
<name>ACYP2_MELGA</name>
<proteinExistence type="evidence at protein level"/>
<sequence length="103" mass="11448">MSALTKASGALKSVDYEVFGRVQGVCFRMYTEEEARKLGVVGWVKNTRQGTVTGQVQGPEDKVNAMKSWLSKVGSPSSRIDRTNFSNEKEISKLDFSGFSTRY</sequence>
<organism>
    <name type="scientific">Meleagris gallopavo</name>
    <name type="common">Wild turkey</name>
    <dbReference type="NCBI Taxonomy" id="9103"/>
    <lineage>
        <taxon>Eukaryota</taxon>
        <taxon>Metazoa</taxon>
        <taxon>Chordata</taxon>
        <taxon>Craniata</taxon>
        <taxon>Vertebrata</taxon>
        <taxon>Euteleostomi</taxon>
        <taxon>Archelosauria</taxon>
        <taxon>Archosauria</taxon>
        <taxon>Dinosauria</taxon>
        <taxon>Saurischia</taxon>
        <taxon>Theropoda</taxon>
        <taxon>Coelurosauria</taxon>
        <taxon>Aves</taxon>
        <taxon>Neognathae</taxon>
        <taxon>Galloanserae</taxon>
        <taxon>Galliformes</taxon>
        <taxon>Phasianidae</taxon>
        <taxon>Meleagridinae</taxon>
        <taxon>Meleagris</taxon>
    </lineage>
</organism>
<keyword id="KW-0007">Acetylation</keyword>
<keyword id="KW-0903">Direct protein sequencing</keyword>
<keyword id="KW-1015">Disulfide bond</keyword>
<keyword id="KW-0318">Glutathionylation</keyword>
<keyword id="KW-0378">Hydrolase</keyword>
<keyword id="KW-1185">Reference proteome</keyword>
<accession>P00821</accession>
<evidence type="ECO:0000250" key="1"/>
<evidence type="ECO:0000255" key="2">
    <source>
        <dbReference type="PROSITE-ProRule" id="PRU00520"/>
    </source>
</evidence>
<evidence type="ECO:0000269" key="3">
    <source>
    </source>
</evidence>
<evidence type="ECO:0000305" key="4"/>